<proteinExistence type="inferred from homology"/>
<reference key="1">
    <citation type="journal article" date="2011" name="MBio">
        <title>Novel metabolic attributes of the genus Cyanothece, comprising a group of unicellular nitrogen-fixing Cyanobacteria.</title>
        <authorList>
            <person name="Bandyopadhyay A."/>
            <person name="Elvitigala T."/>
            <person name="Welsh E."/>
            <person name="Stockel J."/>
            <person name="Liberton M."/>
            <person name="Min H."/>
            <person name="Sherman L.A."/>
            <person name="Pakrasi H.B."/>
        </authorList>
    </citation>
    <scope>NUCLEOTIDE SEQUENCE [LARGE SCALE GENOMIC DNA]</scope>
    <source>
        <strain>PCC 7425 / ATCC 29141</strain>
    </source>
</reference>
<evidence type="ECO:0000255" key="1">
    <source>
        <dbReference type="HAMAP-Rule" id="MF_00127"/>
    </source>
</evidence>
<dbReference type="EC" id="6.1.1.21" evidence="1"/>
<dbReference type="EMBL" id="CP001344">
    <property type="protein sequence ID" value="ACL43635.1"/>
    <property type="molecule type" value="Genomic_DNA"/>
</dbReference>
<dbReference type="SMR" id="B8HMM0"/>
<dbReference type="STRING" id="395961.Cyan7425_1257"/>
<dbReference type="KEGG" id="cyn:Cyan7425_1257"/>
<dbReference type="eggNOG" id="COG0124">
    <property type="taxonomic scope" value="Bacteria"/>
</dbReference>
<dbReference type="HOGENOM" id="CLU_025113_1_1_3"/>
<dbReference type="OrthoDB" id="9800814at2"/>
<dbReference type="GO" id="GO:0005737">
    <property type="term" value="C:cytoplasm"/>
    <property type="evidence" value="ECO:0007669"/>
    <property type="project" value="UniProtKB-SubCell"/>
</dbReference>
<dbReference type="GO" id="GO:0005524">
    <property type="term" value="F:ATP binding"/>
    <property type="evidence" value="ECO:0007669"/>
    <property type="project" value="UniProtKB-UniRule"/>
</dbReference>
<dbReference type="GO" id="GO:0004821">
    <property type="term" value="F:histidine-tRNA ligase activity"/>
    <property type="evidence" value="ECO:0007669"/>
    <property type="project" value="UniProtKB-UniRule"/>
</dbReference>
<dbReference type="GO" id="GO:0006427">
    <property type="term" value="P:histidyl-tRNA aminoacylation"/>
    <property type="evidence" value="ECO:0007669"/>
    <property type="project" value="UniProtKB-UniRule"/>
</dbReference>
<dbReference type="CDD" id="cd00773">
    <property type="entry name" value="HisRS-like_core"/>
    <property type="match status" value="1"/>
</dbReference>
<dbReference type="CDD" id="cd00859">
    <property type="entry name" value="HisRS_anticodon"/>
    <property type="match status" value="1"/>
</dbReference>
<dbReference type="FunFam" id="3.30.930.10:FF:000005">
    <property type="entry name" value="Histidine--tRNA ligase"/>
    <property type="match status" value="1"/>
</dbReference>
<dbReference type="Gene3D" id="3.40.50.800">
    <property type="entry name" value="Anticodon-binding domain"/>
    <property type="match status" value="1"/>
</dbReference>
<dbReference type="Gene3D" id="3.30.930.10">
    <property type="entry name" value="Bira Bifunctional Protein, Domain 2"/>
    <property type="match status" value="1"/>
</dbReference>
<dbReference type="HAMAP" id="MF_00127">
    <property type="entry name" value="His_tRNA_synth"/>
    <property type="match status" value="1"/>
</dbReference>
<dbReference type="InterPro" id="IPR006195">
    <property type="entry name" value="aa-tRNA-synth_II"/>
</dbReference>
<dbReference type="InterPro" id="IPR045864">
    <property type="entry name" value="aa-tRNA-synth_II/BPL/LPL"/>
</dbReference>
<dbReference type="InterPro" id="IPR004154">
    <property type="entry name" value="Anticodon-bd"/>
</dbReference>
<dbReference type="InterPro" id="IPR036621">
    <property type="entry name" value="Anticodon-bd_dom_sf"/>
</dbReference>
<dbReference type="InterPro" id="IPR015807">
    <property type="entry name" value="His-tRNA-ligase"/>
</dbReference>
<dbReference type="InterPro" id="IPR041715">
    <property type="entry name" value="HisRS-like_core"/>
</dbReference>
<dbReference type="InterPro" id="IPR004516">
    <property type="entry name" value="HisRS/HisZ"/>
</dbReference>
<dbReference type="InterPro" id="IPR033656">
    <property type="entry name" value="HisRS_anticodon"/>
</dbReference>
<dbReference type="NCBIfam" id="TIGR00442">
    <property type="entry name" value="hisS"/>
    <property type="match status" value="1"/>
</dbReference>
<dbReference type="PANTHER" id="PTHR43707:SF1">
    <property type="entry name" value="HISTIDINE--TRNA LIGASE, MITOCHONDRIAL-RELATED"/>
    <property type="match status" value="1"/>
</dbReference>
<dbReference type="PANTHER" id="PTHR43707">
    <property type="entry name" value="HISTIDYL-TRNA SYNTHETASE"/>
    <property type="match status" value="1"/>
</dbReference>
<dbReference type="Pfam" id="PF03129">
    <property type="entry name" value="HGTP_anticodon"/>
    <property type="match status" value="1"/>
</dbReference>
<dbReference type="Pfam" id="PF13393">
    <property type="entry name" value="tRNA-synt_His"/>
    <property type="match status" value="1"/>
</dbReference>
<dbReference type="PIRSF" id="PIRSF001549">
    <property type="entry name" value="His-tRNA_synth"/>
    <property type="match status" value="1"/>
</dbReference>
<dbReference type="SUPFAM" id="SSF52954">
    <property type="entry name" value="Class II aaRS ABD-related"/>
    <property type="match status" value="1"/>
</dbReference>
<dbReference type="SUPFAM" id="SSF55681">
    <property type="entry name" value="Class II aaRS and biotin synthetases"/>
    <property type="match status" value="1"/>
</dbReference>
<dbReference type="PROSITE" id="PS50862">
    <property type="entry name" value="AA_TRNA_LIGASE_II"/>
    <property type="match status" value="1"/>
</dbReference>
<comment type="catalytic activity">
    <reaction evidence="1">
        <text>tRNA(His) + L-histidine + ATP = L-histidyl-tRNA(His) + AMP + diphosphate + H(+)</text>
        <dbReference type="Rhea" id="RHEA:17313"/>
        <dbReference type="Rhea" id="RHEA-COMP:9665"/>
        <dbReference type="Rhea" id="RHEA-COMP:9689"/>
        <dbReference type="ChEBI" id="CHEBI:15378"/>
        <dbReference type="ChEBI" id="CHEBI:30616"/>
        <dbReference type="ChEBI" id="CHEBI:33019"/>
        <dbReference type="ChEBI" id="CHEBI:57595"/>
        <dbReference type="ChEBI" id="CHEBI:78442"/>
        <dbReference type="ChEBI" id="CHEBI:78527"/>
        <dbReference type="ChEBI" id="CHEBI:456215"/>
        <dbReference type="EC" id="6.1.1.21"/>
    </reaction>
</comment>
<comment type="subunit">
    <text evidence="1">Homodimer.</text>
</comment>
<comment type="subcellular location">
    <subcellularLocation>
        <location evidence="1">Cytoplasm</location>
    </subcellularLocation>
</comment>
<comment type="similarity">
    <text evidence="1">Belongs to the class-II aminoacyl-tRNA synthetase family.</text>
</comment>
<accession>B8HMM0</accession>
<feature type="chain" id="PRO_1000199123" description="Histidine--tRNA ligase">
    <location>
        <begin position="1"/>
        <end position="429"/>
    </location>
</feature>
<organism>
    <name type="scientific">Cyanothece sp. (strain PCC 7425 / ATCC 29141)</name>
    <dbReference type="NCBI Taxonomy" id="395961"/>
    <lineage>
        <taxon>Bacteria</taxon>
        <taxon>Bacillati</taxon>
        <taxon>Cyanobacteriota</taxon>
        <taxon>Cyanophyceae</taxon>
        <taxon>Gomontiellales</taxon>
        <taxon>Cyanothecaceae</taxon>
        <taxon>Cyanothece</taxon>
    </lineage>
</organism>
<protein>
    <recommendedName>
        <fullName evidence="1">Histidine--tRNA ligase</fullName>
        <ecNumber evidence="1">6.1.1.21</ecNumber>
    </recommendedName>
    <alternativeName>
        <fullName evidence="1">Histidyl-tRNA synthetase</fullName>
        <shortName evidence="1">HisRS</shortName>
    </alternativeName>
</protein>
<gene>
    <name evidence="1" type="primary">hisS</name>
    <name type="ordered locus">Cyan7425_1257</name>
</gene>
<keyword id="KW-0030">Aminoacyl-tRNA synthetase</keyword>
<keyword id="KW-0067">ATP-binding</keyword>
<keyword id="KW-0963">Cytoplasm</keyword>
<keyword id="KW-0436">Ligase</keyword>
<keyword id="KW-0547">Nucleotide-binding</keyword>
<keyword id="KW-0648">Protein biosynthesis</keyword>
<name>SYH_CYAP4</name>
<sequence length="429" mass="48623">MSSIQASRGTRDILPEEIVYWQRVEAMARQILQRAAYQEIRTPMFEQTALFERGIGEATDIVGKEMYTFLDRGERSLTLRPEGTAGVVRALIEHKLFAQGGVQRLWYTGPMFRYERPQAGRQRQFHQLGVEVLGSADPRADAEVIAIATDLLQQLRLTDWTLMLNSVGNQEDRQRYRQALVDYLTPYQAELDPDSQERLHRNPLRILDSKDQRTQEICQQAPQILNYLGETSRQHFDRVQQSLTDLGIPYELNHRLVRGLDYYTHTAFEFQTTELGAQATVCGGGRYDRLVTELGGPDTPAVGWAIGLERLILLLQHQNISYEAKPDFYLVAKGEVAEPQALILAQKLRHHGFVVELDLSGSAFGKQLKRADRSGAPLCLILGDAEAEAQTVQLKWLASGEQEVLSQTDLLDRSNLLRQKIADSYSLKT</sequence>